<keyword id="KW-1185">Reference proteome</keyword>
<keyword id="KW-0687">Ribonucleoprotein</keyword>
<keyword id="KW-0689">Ribosomal protein</keyword>
<keyword id="KW-0694">RNA-binding</keyword>
<keyword id="KW-0699">rRNA-binding</keyword>
<keyword id="KW-0820">tRNA-binding</keyword>
<sequence length="136" mass="15392">MLQPKRTKFRKMMKGRNRGLATGHKVSFGEIGLQAVGRCRLSARQIESARRAMTRHVKRQGKIWIRVFPDKPVTKKPLEVRMGKGKGSVEYWVAKIKPGQMLFEMQGVEETVAIEAFALASGKLPVKTTIIKRTVM</sequence>
<name>RL16_VESOH</name>
<evidence type="ECO:0000255" key="1">
    <source>
        <dbReference type="HAMAP-Rule" id="MF_01342"/>
    </source>
</evidence>
<evidence type="ECO:0000305" key="2"/>
<accession>A5CXL1</accession>
<reference key="1">
    <citation type="journal article" date="2007" name="Curr. Biol.">
        <title>Reduced genome of the thioautotrophic intracellular symbiont in a deep-sea clam, Calyptogena okutanii.</title>
        <authorList>
            <person name="Kuwahara H."/>
            <person name="Yoshida T."/>
            <person name="Takaki Y."/>
            <person name="Shimamura S."/>
            <person name="Nishi S."/>
            <person name="Harada M."/>
            <person name="Matsuyama K."/>
            <person name="Takishita K."/>
            <person name="Kawato M."/>
            <person name="Uematsu K."/>
            <person name="Fujiwara Y."/>
            <person name="Sato T."/>
            <person name="Kato C."/>
            <person name="Kitagawa M."/>
            <person name="Kato I."/>
            <person name="Maruyama T."/>
        </authorList>
    </citation>
    <scope>NUCLEOTIDE SEQUENCE [LARGE SCALE GENOMIC DNA]</scope>
    <source>
        <strain>HA</strain>
    </source>
</reference>
<organism>
    <name type="scientific">Vesicomyosocius okutanii subsp. Calyptogena okutanii (strain HA)</name>
    <dbReference type="NCBI Taxonomy" id="412965"/>
    <lineage>
        <taxon>Bacteria</taxon>
        <taxon>Pseudomonadati</taxon>
        <taxon>Pseudomonadota</taxon>
        <taxon>Gammaproteobacteria</taxon>
        <taxon>Candidatus Pseudothioglobaceae</taxon>
        <taxon>Candidatus Vesicomyosocius</taxon>
    </lineage>
</organism>
<comment type="function">
    <text evidence="1">Binds 23S rRNA and is also seen to make contacts with the A and possibly P site tRNAs.</text>
</comment>
<comment type="subunit">
    <text evidence="1">Part of the 50S ribosomal subunit.</text>
</comment>
<comment type="similarity">
    <text evidence="1">Belongs to the universal ribosomal protein uL16 family.</text>
</comment>
<dbReference type="EMBL" id="AP009247">
    <property type="protein sequence ID" value="BAF61306.1"/>
    <property type="molecule type" value="Genomic_DNA"/>
</dbReference>
<dbReference type="RefSeq" id="WP_011929576.1">
    <property type="nucleotide sequence ID" value="NC_009465.1"/>
</dbReference>
<dbReference type="SMR" id="A5CXL1"/>
<dbReference type="STRING" id="412965.COSY_0176"/>
<dbReference type="KEGG" id="vok:COSY_0176"/>
<dbReference type="eggNOG" id="COG0197">
    <property type="taxonomic scope" value="Bacteria"/>
</dbReference>
<dbReference type="HOGENOM" id="CLU_078858_2_1_6"/>
<dbReference type="OrthoDB" id="9802589at2"/>
<dbReference type="Proteomes" id="UP000000247">
    <property type="component" value="Chromosome"/>
</dbReference>
<dbReference type="GO" id="GO:0022625">
    <property type="term" value="C:cytosolic large ribosomal subunit"/>
    <property type="evidence" value="ECO:0007669"/>
    <property type="project" value="TreeGrafter"/>
</dbReference>
<dbReference type="GO" id="GO:0019843">
    <property type="term" value="F:rRNA binding"/>
    <property type="evidence" value="ECO:0007669"/>
    <property type="project" value="UniProtKB-UniRule"/>
</dbReference>
<dbReference type="GO" id="GO:0003735">
    <property type="term" value="F:structural constituent of ribosome"/>
    <property type="evidence" value="ECO:0007669"/>
    <property type="project" value="InterPro"/>
</dbReference>
<dbReference type="GO" id="GO:0000049">
    <property type="term" value="F:tRNA binding"/>
    <property type="evidence" value="ECO:0007669"/>
    <property type="project" value="UniProtKB-KW"/>
</dbReference>
<dbReference type="GO" id="GO:0006412">
    <property type="term" value="P:translation"/>
    <property type="evidence" value="ECO:0007669"/>
    <property type="project" value="UniProtKB-UniRule"/>
</dbReference>
<dbReference type="CDD" id="cd01433">
    <property type="entry name" value="Ribosomal_L16_L10e"/>
    <property type="match status" value="1"/>
</dbReference>
<dbReference type="FunFam" id="3.90.1170.10:FF:000001">
    <property type="entry name" value="50S ribosomal protein L16"/>
    <property type="match status" value="1"/>
</dbReference>
<dbReference type="Gene3D" id="3.90.1170.10">
    <property type="entry name" value="Ribosomal protein L10e/L16"/>
    <property type="match status" value="1"/>
</dbReference>
<dbReference type="HAMAP" id="MF_01342">
    <property type="entry name" value="Ribosomal_uL16"/>
    <property type="match status" value="1"/>
</dbReference>
<dbReference type="InterPro" id="IPR047873">
    <property type="entry name" value="Ribosomal_uL16"/>
</dbReference>
<dbReference type="InterPro" id="IPR000114">
    <property type="entry name" value="Ribosomal_uL16_bact-type"/>
</dbReference>
<dbReference type="InterPro" id="IPR020798">
    <property type="entry name" value="Ribosomal_uL16_CS"/>
</dbReference>
<dbReference type="InterPro" id="IPR016180">
    <property type="entry name" value="Ribosomal_uL16_dom"/>
</dbReference>
<dbReference type="InterPro" id="IPR036920">
    <property type="entry name" value="Ribosomal_uL16_sf"/>
</dbReference>
<dbReference type="NCBIfam" id="TIGR01164">
    <property type="entry name" value="rplP_bact"/>
    <property type="match status" value="1"/>
</dbReference>
<dbReference type="PANTHER" id="PTHR12220">
    <property type="entry name" value="50S/60S RIBOSOMAL PROTEIN L16"/>
    <property type="match status" value="1"/>
</dbReference>
<dbReference type="PANTHER" id="PTHR12220:SF13">
    <property type="entry name" value="LARGE RIBOSOMAL SUBUNIT PROTEIN UL16M"/>
    <property type="match status" value="1"/>
</dbReference>
<dbReference type="Pfam" id="PF00252">
    <property type="entry name" value="Ribosomal_L16"/>
    <property type="match status" value="1"/>
</dbReference>
<dbReference type="PRINTS" id="PR00060">
    <property type="entry name" value="RIBOSOMALL16"/>
</dbReference>
<dbReference type="SUPFAM" id="SSF54686">
    <property type="entry name" value="Ribosomal protein L16p/L10e"/>
    <property type="match status" value="1"/>
</dbReference>
<dbReference type="PROSITE" id="PS00586">
    <property type="entry name" value="RIBOSOMAL_L16_1"/>
    <property type="match status" value="1"/>
</dbReference>
<dbReference type="PROSITE" id="PS00701">
    <property type="entry name" value="RIBOSOMAL_L16_2"/>
    <property type="match status" value="1"/>
</dbReference>
<protein>
    <recommendedName>
        <fullName evidence="1">Large ribosomal subunit protein uL16</fullName>
    </recommendedName>
    <alternativeName>
        <fullName evidence="2">50S ribosomal protein L16</fullName>
    </alternativeName>
</protein>
<feature type="chain" id="PRO_1000054730" description="Large ribosomal subunit protein uL16">
    <location>
        <begin position="1"/>
        <end position="136"/>
    </location>
</feature>
<proteinExistence type="inferred from homology"/>
<gene>
    <name evidence="1" type="primary">rplP</name>
    <name type="ordered locus">COSY_0176</name>
</gene>